<organism>
    <name type="scientific">Stenotrophomonas maltophilia (strain R551-3)</name>
    <dbReference type="NCBI Taxonomy" id="391008"/>
    <lineage>
        <taxon>Bacteria</taxon>
        <taxon>Pseudomonadati</taxon>
        <taxon>Pseudomonadota</taxon>
        <taxon>Gammaproteobacteria</taxon>
        <taxon>Lysobacterales</taxon>
        <taxon>Lysobacteraceae</taxon>
        <taxon>Stenotrophomonas</taxon>
        <taxon>Stenotrophomonas maltophilia group</taxon>
    </lineage>
</organism>
<gene>
    <name evidence="1" type="primary">htpX</name>
    <name type="ordered locus">Smal_2748</name>
</gene>
<accession>B4SQB7</accession>
<proteinExistence type="inferred from homology"/>
<protein>
    <recommendedName>
        <fullName evidence="1">Protease HtpX</fullName>
        <ecNumber evidence="1">3.4.24.-</ecNumber>
    </recommendedName>
    <alternativeName>
        <fullName evidence="1">Heat shock protein HtpX</fullName>
    </alternativeName>
</protein>
<comment type="cofactor">
    <cofactor evidence="1">
        <name>Zn(2+)</name>
        <dbReference type="ChEBI" id="CHEBI:29105"/>
    </cofactor>
    <text evidence="1">Binds 1 zinc ion per subunit.</text>
</comment>
<comment type="subcellular location">
    <subcellularLocation>
        <location evidence="1">Cell inner membrane</location>
        <topology evidence="1">Multi-pass membrane protein</topology>
    </subcellularLocation>
</comment>
<comment type="similarity">
    <text evidence="1">Belongs to the peptidase M48B family.</text>
</comment>
<reference key="1">
    <citation type="submission" date="2008-06" db="EMBL/GenBank/DDBJ databases">
        <title>Complete sequence of Stenotrophomonas maltophilia R551-3.</title>
        <authorList>
            <consortium name="US DOE Joint Genome Institute"/>
            <person name="Lucas S."/>
            <person name="Copeland A."/>
            <person name="Lapidus A."/>
            <person name="Glavina del Rio T."/>
            <person name="Dalin E."/>
            <person name="Tice H."/>
            <person name="Pitluck S."/>
            <person name="Chain P."/>
            <person name="Malfatti S."/>
            <person name="Shin M."/>
            <person name="Vergez L."/>
            <person name="Lang D."/>
            <person name="Schmutz J."/>
            <person name="Larimer F."/>
            <person name="Land M."/>
            <person name="Hauser L."/>
            <person name="Kyrpides N."/>
            <person name="Mikhailova N."/>
            <person name="Taghavi S."/>
            <person name="Monchy S."/>
            <person name="Newman L."/>
            <person name="Vangronsveld J."/>
            <person name="van der Lelie D."/>
            <person name="Richardson P."/>
        </authorList>
    </citation>
    <scope>NUCLEOTIDE SEQUENCE [LARGE SCALE GENOMIC DNA]</scope>
    <source>
        <strain>R551-3</strain>
    </source>
</reference>
<name>HTPX_STRM5</name>
<evidence type="ECO:0000255" key="1">
    <source>
        <dbReference type="HAMAP-Rule" id="MF_00188"/>
    </source>
</evidence>
<sequence>MFTRIALFLATNLAVLILASIVMSLLGVDSRSMSGLLVMAGIFGFGGSFISLLLSKWMAKRSTGAVVITEPRNQTERWLLATVERQAKAAGIGMPEVAVYEGPEINAFATGANRNNALVAVSTGLLHNMSEDEAEAVLGHEIAHVANGDMITMALLQGVLNTFVIVLARVVGGIIDSALSGNREGGGRGFAYFIIVFVLEMVFGLFATMISMWFSRHREFRADAGGASLAGRQKMIAALERLQLNHGQSTLPTQIAAFGIAGSTAKKLFMSHPPLEERIAALRASTVA</sequence>
<feature type="chain" id="PRO_1000098849" description="Protease HtpX">
    <location>
        <begin position="1"/>
        <end position="288"/>
    </location>
</feature>
<feature type="transmembrane region" description="Helical" evidence="1">
    <location>
        <begin position="5"/>
        <end position="25"/>
    </location>
</feature>
<feature type="transmembrane region" description="Helical" evidence="1">
    <location>
        <begin position="34"/>
        <end position="54"/>
    </location>
</feature>
<feature type="transmembrane region" description="Helical" evidence="1">
    <location>
        <begin position="155"/>
        <end position="175"/>
    </location>
</feature>
<feature type="transmembrane region" description="Helical" evidence="1">
    <location>
        <begin position="190"/>
        <end position="210"/>
    </location>
</feature>
<feature type="active site" evidence="1">
    <location>
        <position position="141"/>
    </location>
</feature>
<feature type="binding site" evidence="1">
    <location>
        <position position="140"/>
    </location>
    <ligand>
        <name>Zn(2+)</name>
        <dbReference type="ChEBI" id="CHEBI:29105"/>
        <note>catalytic</note>
    </ligand>
</feature>
<feature type="binding site" evidence="1">
    <location>
        <position position="144"/>
    </location>
    <ligand>
        <name>Zn(2+)</name>
        <dbReference type="ChEBI" id="CHEBI:29105"/>
        <note>catalytic</note>
    </ligand>
</feature>
<feature type="binding site" evidence="1">
    <location>
        <position position="219"/>
    </location>
    <ligand>
        <name>Zn(2+)</name>
        <dbReference type="ChEBI" id="CHEBI:29105"/>
        <note>catalytic</note>
    </ligand>
</feature>
<dbReference type="EC" id="3.4.24.-" evidence="1"/>
<dbReference type="EMBL" id="CP001111">
    <property type="protein sequence ID" value="ACF52448.1"/>
    <property type="molecule type" value="Genomic_DNA"/>
</dbReference>
<dbReference type="RefSeq" id="WP_006379846.1">
    <property type="nucleotide sequence ID" value="NC_011071.1"/>
</dbReference>
<dbReference type="SMR" id="B4SQB7"/>
<dbReference type="STRING" id="391008.Smal_2748"/>
<dbReference type="MEROPS" id="M48.002"/>
<dbReference type="KEGG" id="smt:Smal_2748"/>
<dbReference type="eggNOG" id="COG0501">
    <property type="taxonomic scope" value="Bacteria"/>
</dbReference>
<dbReference type="HOGENOM" id="CLU_042266_1_0_6"/>
<dbReference type="OrthoDB" id="15218at2"/>
<dbReference type="Proteomes" id="UP000001867">
    <property type="component" value="Chromosome"/>
</dbReference>
<dbReference type="GO" id="GO:0005886">
    <property type="term" value="C:plasma membrane"/>
    <property type="evidence" value="ECO:0007669"/>
    <property type="project" value="UniProtKB-SubCell"/>
</dbReference>
<dbReference type="GO" id="GO:0004222">
    <property type="term" value="F:metalloendopeptidase activity"/>
    <property type="evidence" value="ECO:0007669"/>
    <property type="project" value="UniProtKB-UniRule"/>
</dbReference>
<dbReference type="GO" id="GO:0008270">
    <property type="term" value="F:zinc ion binding"/>
    <property type="evidence" value="ECO:0007669"/>
    <property type="project" value="UniProtKB-UniRule"/>
</dbReference>
<dbReference type="GO" id="GO:0006508">
    <property type="term" value="P:proteolysis"/>
    <property type="evidence" value="ECO:0007669"/>
    <property type="project" value="UniProtKB-KW"/>
</dbReference>
<dbReference type="CDD" id="cd07335">
    <property type="entry name" value="M48B_HtpX_like"/>
    <property type="match status" value="1"/>
</dbReference>
<dbReference type="Gene3D" id="3.30.2010.10">
    <property type="entry name" value="Metalloproteases ('zincins'), catalytic domain"/>
    <property type="match status" value="1"/>
</dbReference>
<dbReference type="HAMAP" id="MF_00188">
    <property type="entry name" value="Pept_M48_protease_HtpX"/>
    <property type="match status" value="1"/>
</dbReference>
<dbReference type="InterPro" id="IPR050083">
    <property type="entry name" value="HtpX_protease"/>
</dbReference>
<dbReference type="InterPro" id="IPR022919">
    <property type="entry name" value="Pept_M48_protease_HtpX"/>
</dbReference>
<dbReference type="InterPro" id="IPR001915">
    <property type="entry name" value="Peptidase_M48"/>
</dbReference>
<dbReference type="NCBIfam" id="NF003965">
    <property type="entry name" value="PRK05457.1"/>
    <property type="match status" value="1"/>
</dbReference>
<dbReference type="PANTHER" id="PTHR43221">
    <property type="entry name" value="PROTEASE HTPX"/>
    <property type="match status" value="1"/>
</dbReference>
<dbReference type="PANTHER" id="PTHR43221:SF1">
    <property type="entry name" value="PROTEASE HTPX"/>
    <property type="match status" value="1"/>
</dbReference>
<dbReference type="Pfam" id="PF01435">
    <property type="entry name" value="Peptidase_M48"/>
    <property type="match status" value="1"/>
</dbReference>
<keyword id="KW-0997">Cell inner membrane</keyword>
<keyword id="KW-1003">Cell membrane</keyword>
<keyword id="KW-0378">Hydrolase</keyword>
<keyword id="KW-0472">Membrane</keyword>
<keyword id="KW-0479">Metal-binding</keyword>
<keyword id="KW-0482">Metalloprotease</keyword>
<keyword id="KW-0645">Protease</keyword>
<keyword id="KW-0812">Transmembrane</keyword>
<keyword id="KW-1133">Transmembrane helix</keyword>
<keyword id="KW-0862">Zinc</keyword>